<accession>Q06GW6</accession>
<gene>
    <name evidence="2" type="primary">petD</name>
</gene>
<organism>
    <name type="scientific">Drimys granadensis</name>
    <dbReference type="NCBI Taxonomy" id="224735"/>
    <lineage>
        <taxon>Eukaryota</taxon>
        <taxon>Viridiplantae</taxon>
        <taxon>Streptophyta</taxon>
        <taxon>Embryophyta</taxon>
        <taxon>Tracheophyta</taxon>
        <taxon>Spermatophyta</taxon>
        <taxon>Magnoliopsida</taxon>
        <taxon>Magnoliidae</taxon>
        <taxon>Canellales</taxon>
        <taxon>Winteraceae</taxon>
        <taxon>Drimys</taxon>
    </lineage>
</organism>
<keyword id="KW-0150">Chloroplast</keyword>
<keyword id="KW-0249">Electron transport</keyword>
<keyword id="KW-0472">Membrane</keyword>
<keyword id="KW-0602">Photosynthesis</keyword>
<keyword id="KW-0934">Plastid</keyword>
<keyword id="KW-0793">Thylakoid</keyword>
<keyword id="KW-0812">Transmembrane</keyword>
<keyword id="KW-1133">Transmembrane helix</keyword>
<keyword id="KW-0813">Transport</keyword>
<name>PETD_DRIGR</name>
<geneLocation type="chloroplast"/>
<evidence type="ECO:0000250" key="1"/>
<evidence type="ECO:0000255" key="2">
    <source>
        <dbReference type="HAMAP-Rule" id="MF_01344"/>
    </source>
</evidence>
<protein>
    <recommendedName>
        <fullName evidence="2">Cytochrome b6-f complex subunit 4</fullName>
    </recommendedName>
    <alternativeName>
        <fullName evidence="2">17 kDa polypeptide</fullName>
    </alternativeName>
</protein>
<sequence length="163" mass="17859">MGITKKPDLNDPVLRAKLAKGMGHNYYGEPAWPNDLLYIFPVVILGTIACNVGLAVLEPSMIGEPADPFATPLEILPEWYFFPVFQILRTVPNKLLGVLLMVSVPTGLLTVPFLENVNKFQNPFRRPVATTVFLIGTAVALWLGIGATLPIDKSLTLGLFQID</sequence>
<feature type="chain" id="PRO_0000276537" description="Cytochrome b6-f complex subunit 4">
    <location>
        <begin position="1"/>
        <end position="163"/>
    </location>
</feature>
<feature type="transmembrane region" description="Helical" evidence="2">
    <location>
        <begin position="36"/>
        <end position="56"/>
    </location>
</feature>
<feature type="transmembrane region" description="Helical" evidence="2">
    <location>
        <begin position="95"/>
        <end position="115"/>
    </location>
</feature>
<feature type="transmembrane region" description="Helical" evidence="2">
    <location>
        <begin position="131"/>
        <end position="151"/>
    </location>
</feature>
<dbReference type="EMBL" id="DQ887676">
    <property type="protein sequence ID" value="ABH88327.1"/>
    <property type="molecule type" value="Genomic_DNA"/>
</dbReference>
<dbReference type="RefSeq" id="YP_784417.1">
    <property type="nucleotide sequence ID" value="NC_008456.1"/>
</dbReference>
<dbReference type="SMR" id="Q06GW6"/>
<dbReference type="GeneID" id="4363603"/>
<dbReference type="GO" id="GO:0009535">
    <property type="term" value="C:chloroplast thylakoid membrane"/>
    <property type="evidence" value="ECO:0007669"/>
    <property type="project" value="UniProtKB-SubCell"/>
</dbReference>
<dbReference type="GO" id="GO:0045158">
    <property type="term" value="F:electron transporter, transferring electrons within cytochrome b6/f complex of photosystem II activity"/>
    <property type="evidence" value="ECO:0007669"/>
    <property type="project" value="UniProtKB-UniRule"/>
</dbReference>
<dbReference type="GO" id="GO:0045156">
    <property type="term" value="F:electron transporter, transferring electrons within the cyclic electron transport pathway of photosynthesis activity"/>
    <property type="evidence" value="ECO:0007669"/>
    <property type="project" value="InterPro"/>
</dbReference>
<dbReference type="GO" id="GO:0016491">
    <property type="term" value="F:oxidoreductase activity"/>
    <property type="evidence" value="ECO:0007669"/>
    <property type="project" value="InterPro"/>
</dbReference>
<dbReference type="GO" id="GO:0009767">
    <property type="term" value="P:photosynthetic electron transport chain"/>
    <property type="evidence" value="ECO:0007669"/>
    <property type="project" value="InterPro"/>
</dbReference>
<dbReference type="CDD" id="cd00290">
    <property type="entry name" value="cytochrome_b_C"/>
    <property type="match status" value="1"/>
</dbReference>
<dbReference type="FunFam" id="1.10.287.980:FF:000001">
    <property type="entry name" value="Cytochrome b6-f complex subunit 4"/>
    <property type="match status" value="1"/>
</dbReference>
<dbReference type="FunFam" id="1.20.5.510:FF:000002">
    <property type="entry name" value="Cytochrome b6-f complex subunit 4"/>
    <property type="match status" value="1"/>
</dbReference>
<dbReference type="Gene3D" id="1.10.287.980">
    <property type="entry name" value="plastocyanin oxidoreductase"/>
    <property type="match status" value="1"/>
</dbReference>
<dbReference type="Gene3D" id="1.20.5.510">
    <property type="entry name" value="Single helix bin"/>
    <property type="match status" value="1"/>
</dbReference>
<dbReference type="HAMAP" id="MF_01344">
    <property type="entry name" value="Cytb6_f_subIV"/>
    <property type="match status" value="1"/>
</dbReference>
<dbReference type="InterPro" id="IPR005798">
    <property type="entry name" value="Cyt_b/b6_C"/>
</dbReference>
<dbReference type="InterPro" id="IPR036150">
    <property type="entry name" value="Cyt_b/b6_C_sf"/>
</dbReference>
<dbReference type="InterPro" id="IPR005870">
    <property type="entry name" value="Cyt_b6/f_cplx_suIV"/>
</dbReference>
<dbReference type="InterPro" id="IPR048260">
    <property type="entry name" value="Cytochrome_b_C_euk/bac"/>
</dbReference>
<dbReference type="NCBIfam" id="TIGR01156">
    <property type="entry name" value="cytb6_f_IV"/>
    <property type="match status" value="1"/>
</dbReference>
<dbReference type="PANTHER" id="PTHR19271">
    <property type="entry name" value="CYTOCHROME B"/>
    <property type="match status" value="1"/>
</dbReference>
<dbReference type="PANTHER" id="PTHR19271:SF40">
    <property type="entry name" value="CYTOCHROME B"/>
    <property type="match status" value="1"/>
</dbReference>
<dbReference type="Pfam" id="PF00032">
    <property type="entry name" value="Cytochrom_B_C"/>
    <property type="match status" value="1"/>
</dbReference>
<dbReference type="PIRSF" id="PIRSF000033">
    <property type="entry name" value="B6f_17K"/>
    <property type="match status" value="1"/>
</dbReference>
<dbReference type="SUPFAM" id="SSF81648">
    <property type="entry name" value="a domain/subunit of cytochrome bc1 complex (Ubiquinol-cytochrome c reductase)"/>
    <property type="match status" value="1"/>
</dbReference>
<dbReference type="PROSITE" id="PS51003">
    <property type="entry name" value="CYTB_CTER"/>
    <property type="match status" value="1"/>
</dbReference>
<reference key="1">
    <citation type="journal article" date="2006" name="BMC Evol. Biol.">
        <title>Complete plastid genome sequences of Drimys, Liriodendron, and Piper: implications for the phylogenetic relationships of magnoliids.</title>
        <authorList>
            <person name="Cai Z."/>
            <person name="Penaflor C."/>
            <person name="Kuehl J.V."/>
            <person name="Leebens-Mack J."/>
            <person name="Carlson J.E."/>
            <person name="dePamphilis C.W."/>
            <person name="Boore J.L."/>
            <person name="Jansen R.K."/>
        </authorList>
    </citation>
    <scope>NUCLEOTIDE SEQUENCE [LARGE SCALE GENOMIC DNA]</scope>
</reference>
<comment type="function">
    <text evidence="2">Component of the cytochrome b6-f complex, which mediates electron transfer between photosystem II (PSII) and photosystem I (PSI), cyclic electron flow around PSI, and state transitions.</text>
</comment>
<comment type="subunit">
    <text evidence="1">The 4 large subunits of the cytochrome b6-f complex are cytochrome b6, subunit IV (17 kDa polypeptide, petD), cytochrome f and the Rieske protein, while the 4 small subunits are petG, petL, petM and petN. The complex functions as a dimer (By similarity).</text>
</comment>
<comment type="subcellular location">
    <subcellularLocation>
        <location evidence="2">Plastid</location>
        <location evidence="2">Chloroplast thylakoid membrane</location>
        <topology evidence="2">Multi-pass membrane protein</topology>
    </subcellularLocation>
</comment>
<comment type="similarity">
    <text evidence="2">Belongs to the cytochrome b family. PetD subfamily.</text>
</comment>
<proteinExistence type="inferred from homology"/>